<dbReference type="EMBL" id="FJ611907">
    <property type="protein sequence ID" value="ACO50412.1"/>
    <property type="molecule type" value="mRNA"/>
</dbReference>
<dbReference type="EMBL" id="U93215">
    <property type="protein sequence ID" value="AAB63083.1"/>
    <property type="molecule type" value="Genomic_DNA"/>
</dbReference>
<dbReference type="EMBL" id="CP002685">
    <property type="protein sequence ID" value="AEC08405.1"/>
    <property type="molecule type" value="Genomic_DNA"/>
</dbReference>
<dbReference type="EMBL" id="AY127010">
    <property type="protein sequence ID" value="AAM83235.1"/>
    <property type="molecule type" value="mRNA"/>
</dbReference>
<dbReference type="EMBL" id="BT001028">
    <property type="protein sequence ID" value="AAN46782.1"/>
    <property type="molecule type" value="mRNA"/>
</dbReference>
<dbReference type="EMBL" id="AY087910">
    <property type="protein sequence ID" value="AAM65461.1"/>
    <property type="molecule type" value="mRNA"/>
</dbReference>
<dbReference type="PIR" id="F84709">
    <property type="entry name" value="F84709"/>
</dbReference>
<dbReference type="RefSeq" id="NP_180612.1">
    <property type="nucleotide sequence ID" value="NM_128606.3"/>
</dbReference>
<dbReference type="SMR" id="O04341"/>
<dbReference type="BioGRID" id="2952">
    <property type="interactions" value="8"/>
</dbReference>
<dbReference type="FunCoup" id="O04341">
    <property type="interactions" value="30"/>
</dbReference>
<dbReference type="IntAct" id="O04341">
    <property type="interactions" value="7"/>
</dbReference>
<dbReference type="STRING" id="3702.O04341"/>
<dbReference type="PaxDb" id="3702-AT2G30540.1"/>
<dbReference type="ProteomicsDB" id="222256"/>
<dbReference type="EnsemblPlants" id="AT2G30540.1">
    <property type="protein sequence ID" value="AT2G30540.1"/>
    <property type="gene ID" value="AT2G30540"/>
</dbReference>
<dbReference type="GeneID" id="817603"/>
<dbReference type="Gramene" id="AT2G30540.1">
    <property type="protein sequence ID" value="AT2G30540.1"/>
    <property type="gene ID" value="AT2G30540"/>
</dbReference>
<dbReference type="KEGG" id="ath:AT2G30540"/>
<dbReference type="Araport" id="AT2G30540"/>
<dbReference type="TAIR" id="AT2G30540">
    <property type="gene designation" value="ROXY7"/>
</dbReference>
<dbReference type="eggNOG" id="KOG1752">
    <property type="taxonomic scope" value="Eukaryota"/>
</dbReference>
<dbReference type="HOGENOM" id="CLU_026126_6_0_1"/>
<dbReference type="InParanoid" id="O04341"/>
<dbReference type="OMA" id="NEIMSHR"/>
<dbReference type="PhylomeDB" id="O04341"/>
<dbReference type="PRO" id="PR:O04341"/>
<dbReference type="Proteomes" id="UP000006548">
    <property type="component" value="Chromosome 2"/>
</dbReference>
<dbReference type="ExpressionAtlas" id="O04341">
    <property type="expression patterns" value="baseline and differential"/>
</dbReference>
<dbReference type="GO" id="GO:0005737">
    <property type="term" value="C:cytoplasm"/>
    <property type="evidence" value="ECO:0007669"/>
    <property type="project" value="UniProtKB-SubCell"/>
</dbReference>
<dbReference type="GO" id="GO:0051537">
    <property type="term" value="F:2 iron, 2 sulfur cluster binding"/>
    <property type="evidence" value="ECO:0007669"/>
    <property type="project" value="UniProtKB-KW"/>
</dbReference>
<dbReference type="GO" id="GO:0046872">
    <property type="term" value="F:metal ion binding"/>
    <property type="evidence" value="ECO:0007669"/>
    <property type="project" value="UniProtKB-KW"/>
</dbReference>
<dbReference type="CDD" id="cd03419">
    <property type="entry name" value="GRX_GRXh_1_2_like"/>
    <property type="match status" value="1"/>
</dbReference>
<dbReference type="FunFam" id="3.40.30.10:FF:000028">
    <property type="entry name" value="Glutaredoxin family protein"/>
    <property type="match status" value="1"/>
</dbReference>
<dbReference type="Gene3D" id="3.40.30.10">
    <property type="entry name" value="Glutaredoxin"/>
    <property type="match status" value="1"/>
</dbReference>
<dbReference type="InterPro" id="IPR011905">
    <property type="entry name" value="GlrX-like_pln_2"/>
</dbReference>
<dbReference type="InterPro" id="IPR002109">
    <property type="entry name" value="Glutaredoxin"/>
</dbReference>
<dbReference type="InterPro" id="IPR036249">
    <property type="entry name" value="Thioredoxin-like_sf"/>
</dbReference>
<dbReference type="NCBIfam" id="TIGR02189">
    <property type="entry name" value="GlrX-like_plant"/>
    <property type="match status" value="1"/>
</dbReference>
<dbReference type="PANTHER" id="PTHR10168">
    <property type="entry name" value="GLUTAREDOXIN"/>
    <property type="match status" value="1"/>
</dbReference>
<dbReference type="Pfam" id="PF00462">
    <property type="entry name" value="Glutaredoxin"/>
    <property type="match status" value="1"/>
</dbReference>
<dbReference type="SUPFAM" id="SSF52833">
    <property type="entry name" value="Thioredoxin-like"/>
    <property type="match status" value="1"/>
</dbReference>
<dbReference type="PROSITE" id="PS51354">
    <property type="entry name" value="GLUTAREDOXIN_2"/>
    <property type="match status" value="1"/>
</dbReference>
<comment type="function">
    <text evidence="4">May only reduce GSH-thiol disulfides, but not protein disulfides.</text>
</comment>
<comment type="interaction">
    <interactant intactId="EBI-4450582">
        <id>O04341</id>
    </interactant>
    <interactant intactId="EBI-541351">
        <id>Q39237</id>
        <label>TGA1</label>
    </interactant>
    <organismsDiffer>false</organismsDiffer>
    <experiments>3</experiments>
</comment>
<comment type="interaction">
    <interactant intactId="EBI-4450582">
        <id>O04341</id>
    </interactant>
    <interactant intactId="EBI-541366">
        <id>Q39234</id>
        <label>TGA3</label>
    </interactant>
    <organismsDiffer>false</organismsDiffer>
    <experiments>4</experiments>
</comment>
<comment type="subcellular location">
    <subcellularLocation>
        <location evidence="1">Cytoplasm</location>
    </subcellularLocation>
</comment>
<comment type="similarity">
    <text evidence="4">Belongs to the glutaredoxin family. CC-type subfamily.</text>
</comment>
<evidence type="ECO:0000250" key="1"/>
<evidence type="ECO:0000255" key="2"/>
<evidence type="ECO:0000255" key="3">
    <source>
        <dbReference type="PROSITE-ProRule" id="PRU00686"/>
    </source>
</evidence>
<evidence type="ECO:0000305" key="4"/>
<feature type="chain" id="PRO_0000268730" description="Monothiol glutaredoxin-S9">
    <location>
        <begin position="1"/>
        <end position="102"/>
    </location>
</feature>
<feature type="domain" description="Glutaredoxin" evidence="3">
    <location>
        <begin position="1"/>
        <end position="101"/>
    </location>
</feature>
<feature type="binding site" evidence="2">
    <location>
        <position position="21"/>
    </location>
    <ligand>
        <name>[2Fe-2S] cluster</name>
        <dbReference type="ChEBI" id="CHEBI:190135"/>
        <note>ligand shared between dimeric partners</note>
    </ligand>
</feature>
<accession>O04341</accession>
<accession>C1JGP8</accession>
<name>GRXS9_ARATH</name>
<protein>
    <recommendedName>
        <fullName>Monothiol glutaredoxin-S9</fullName>
        <shortName>AtGrxS9</shortName>
    </recommendedName>
    <alternativeName>
        <fullName>Protein ROXY 7</fullName>
    </alternativeName>
</protein>
<gene>
    <name type="primary">GRXS9</name>
    <name type="synonym">ROXY7</name>
    <name type="ordered locus">At2g30540</name>
    <name type="ORF">T6B20.11</name>
</gene>
<proteinExistence type="evidence at protein level"/>
<organism>
    <name type="scientific">Arabidopsis thaliana</name>
    <name type="common">Mouse-ear cress</name>
    <dbReference type="NCBI Taxonomy" id="3702"/>
    <lineage>
        <taxon>Eukaryota</taxon>
        <taxon>Viridiplantae</taxon>
        <taxon>Streptophyta</taxon>
        <taxon>Embryophyta</taxon>
        <taxon>Tracheophyta</taxon>
        <taxon>Spermatophyta</taxon>
        <taxon>Magnoliopsida</taxon>
        <taxon>eudicotyledons</taxon>
        <taxon>Gunneridae</taxon>
        <taxon>Pentapetalae</taxon>
        <taxon>rosids</taxon>
        <taxon>malvids</taxon>
        <taxon>Brassicales</taxon>
        <taxon>Brassicaceae</taxon>
        <taxon>Camelineae</taxon>
        <taxon>Arabidopsis</taxon>
    </lineage>
</organism>
<reference key="1">
    <citation type="journal article" date="2009" name="Plant Cell">
        <title>Nuclear activity of ROXY1, a glutaredoxin interacting with TGA factors, is required for petal development in Arabidopsis thaliana.</title>
        <authorList>
            <person name="Li S."/>
            <person name="Lauri A."/>
            <person name="Ziemann M."/>
            <person name="Busch A."/>
            <person name="Bhave M."/>
            <person name="Zachgo S."/>
        </authorList>
    </citation>
    <scope>NUCLEOTIDE SEQUENCE [MRNA]</scope>
    <scope>GENE FAMILY</scope>
</reference>
<reference key="2">
    <citation type="journal article" date="1999" name="Nature">
        <title>Sequence and analysis of chromosome 2 of the plant Arabidopsis thaliana.</title>
        <authorList>
            <person name="Lin X."/>
            <person name="Kaul S."/>
            <person name="Rounsley S.D."/>
            <person name="Shea T.P."/>
            <person name="Benito M.-I."/>
            <person name="Town C.D."/>
            <person name="Fujii C.Y."/>
            <person name="Mason T.M."/>
            <person name="Bowman C.L."/>
            <person name="Barnstead M.E."/>
            <person name="Feldblyum T.V."/>
            <person name="Buell C.R."/>
            <person name="Ketchum K.A."/>
            <person name="Lee J.J."/>
            <person name="Ronning C.M."/>
            <person name="Koo H.L."/>
            <person name="Moffat K.S."/>
            <person name="Cronin L.A."/>
            <person name="Shen M."/>
            <person name="Pai G."/>
            <person name="Van Aken S."/>
            <person name="Umayam L."/>
            <person name="Tallon L.J."/>
            <person name="Gill J.E."/>
            <person name="Adams M.D."/>
            <person name="Carrera A.J."/>
            <person name="Creasy T.H."/>
            <person name="Goodman H.M."/>
            <person name="Somerville C.R."/>
            <person name="Copenhaver G.P."/>
            <person name="Preuss D."/>
            <person name="Nierman W.C."/>
            <person name="White O."/>
            <person name="Eisen J.A."/>
            <person name="Salzberg S.L."/>
            <person name="Fraser C.M."/>
            <person name="Venter J.C."/>
        </authorList>
    </citation>
    <scope>NUCLEOTIDE SEQUENCE [LARGE SCALE GENOMIC DNA]</scope>
    <source>
        <strain>cv. Columbia</strain>
    </source>
</reference>
<reference key="3">
    <citation type="journal article" date="2017" name="Plant J.">
        <title>Araport11: a complete reannotation of the Arabidopsis thaliana reference genome.</title>
        <authorList>
            <person name="Cheng C.Y."/>
            <person name="Krishnakumar V."/>
            <person name="Chan A.P."/>
            <person name="Thibaud-Nissen F."/>
            <person name="Schobel S."/>
            <person name="Town C.D."/>
        </authorList>
    </citation>
    <scope>GENOME REANNOTATION</scope>
    <source>
        <strain>cv. Columbia</strain>
    </source>
</reference>
<reference key="4">
    <citation type="journal article" date="2003" name="Science">
        <title>Empirical analysis of transcriptional activity in the Arabidopsis genome.</title>
        <authorList>
            <person name="Yamada K."/>
            <person name="Lim J."/>
            <person name="Dale J.M."/>
            <person name="Chen H."/>
            <person name="Shinn P."/>
            <person name="Palm C.J."/>
            <person name="Southwick A.M."/>
            <person name="Wu H.C."/>
            <person name="Kim C.J."/>
            <person name="Nguyen M."/>
            <person name="Pham P.K."/>
            <person name="Cheuk R.F."/>
            <person name="Karlin-Newmann G."/>
            <person name="Liu S.X."/>
            <person name="Lam B."/>
            <person name="Sakano H."/>
            <person name="Wu T."/>
            <person name="Yu G."/>
            <person name="Miranda M."/>
            <person name="Quach H.L."/>
            <person name="Tripp M."/>
            <person name="Chang C.H."/>
            <person name="Lee J.M."/>
            <person name="Toriumi M.J."/>
            <person name="Chan M.M."/>
            <person name="Tang C.C."/>
            <person name="Onodera C.S."/>
            <person name="Deng J.M."/>
            <person name="Akiyama K."/>
            <person name="Ansari Y."/>
            <person name="Arakawa T."/>
            <person name="Banh J."/>
            <person name="Banno F."/>
            <person name="Bowser L."/>
            <person name="Brooks S.Y."/>
            <person name="Carninci P."/>
            <person name="Chao Q."/>
            <person name="Choy N."/>
            <person name="Enju A."/>
            <person name="Goldsmith A.D."/>
            <person name="Gurjal M."/>
            <person name="Hansen N.F."/>
            <person name="Hayashizaki Y."/>
            <person name="Johnson-Hopson C."/>
            <person name="Hsuan V.W."/>
            <person name="Iida K."/>
            <person name="Karnes M."/>
            <person name="Khan S."/>
            <person name="Koesema E."/>
            <person name="Ishida J."/>
            <person name="Jiang P.X."/>
            <person name="Jones T."/>
            <person name="Kawai J."/>
            <person name="Kamiya A."/>
            <person name="Meyers C."/>
            <person name="Nakajima M."/>
            <person name="Narusaka M."/>
            <person name="Seki M."/>
            <person name="Sakurai T."/>
            <person name="Satou M."/>
            <person name="Tamse R."/>
            <person name="Vaysberg M."/>
            <person name="Wallender E.K."/>
            <person name="Wong C."/>
            <person name="Yamamura Y."/>
            <person name="Yuan S."/>
            <person name="Shinozaki K."/>
            <person name="Davis R.W."/>
            <person name="Theologis A."/>
            <person name="Ecker J.R."/>
        </authorList>
    </citation>
    <scope>NUCLEOTIDE SEQUENCE [LARGE SCALE MRNA]</scope>
    <source>
        <strain>cv. Columbia</strain>
    </source>
</reference>
<reference key="5">
    <citation type="submission" date="2002-03" db="EMBL/GenBank/DDBJ databases">
        <title>Full-length cDNA from Arabidopsis thaliana.</title>
        <authorList>
            <person name="Brover V.V."/>
            <person name="Troukhan M.E."/>
            <person name="Alexandrov N.A."/>
            <person name="Lu Y.-P."/>
            <person name="Flavell R.B."/>
            <person name="Feldmann K.A."/>
        </authorList>
    </citation>
    <scope>NUCLEOTIDE SEQUENCE [LARGE SCALE MRNA]</scope>
</reference>
<reference key="6">
    <citation type="journal article" date="2004" name="Cell. Mol. Life Sci.">
        <title>Plant glutaredoxins: still mysterious reducing systems.</title>
        <authorList>
            <person name="Rouhier N."/>
            <person name="Gelhaye E."/>
            <person name="Jacquot J.-P."/>
        </authorList>
    </citation>
    <scope>GENE FAMILY</scope>
    <scope>NOMENCLATURE</scope>
</reference>
<reference key="7">
    <citation type="journal article" date="2006" name="J. Exp. Bot.">
        <title>Genome-wide analysis of plant glutaredoxin systems.</title>
        <authorList>
            <person name="Rouhier N."/>
            <person name="Couturier J."/>
            <person name="Jacquot J.-P."/>
        </authorList>
    </citation>
    <scope>GENE FAMILY</scope>
</reference>
<keyword id="KW-0001">2Fe-2S</keyword>
<keyword id="KW-0963">Cytoplasm</keyword>
<keyword id="KW-0408">Iron</keyword>
<keyword id="KW-0411">Iron-sulfur</keyword>
<keyword id="KW-0479">Metal-binding</keyword>
<keyword id="KW-0676">Redox-active center</keyword>
<keyword id="KW-1185">Reference proteome</keyword>
<sequence>MDKVVRMSSEKGVVIFSKSSCCMSYAVQVLFQDLGVHPTVHEIDKDPECREIEKALMRLGCSTPVPAIFVGGKLIGSTNEVMSLHLSGSLVPLVKPFQANLC</sequence>